<accession>Q2IEW1</accession>
<organism>
    <name type="scientific">Anaeromyxobacter dehalogenans (strain 2CP-C)</name>
    <dbReference type="NCBI Taxonomy" id="290397"/>
    <lineage>
        <taxon>Bacteria</taxon>
        <taxon>Pseudomonadati</taxon>
        <taxon>Myxococcota</taxon>
        <taxon>Myxococcia</taxon>
        <taxon>Myxococcales</taxon>
        <taxon>Cystobacterineae</taxon>
        <taxon>Anaeromyxobacteraceae</taxon>
        <taxon>Anaeromyxobacter</taxon>
    </lineage>
</organism>
<protein>
    <recommendedName>
        <fullName evidence="1">ATP-dependent Clp protease proteolytic subunit</fullName>
        <ecNumber evidence="1">3.4.21.92</ecNumber>
    </recommendedName>
    <alternativeName>
        <fullName evidence="1">Endopeptidase Clp</fullName>
    </alternativeName>
</protein>
<evidence type="ECO:0000255" key="1">
    <source>
        <dbReference type="HAMAP-Rule" id="MF_00444"/>
    </source>
</evidence>
<dbReference type="EC" id="3.4.21.92" evidence="1"/>
<dbReference type="EMBL" id="CP000251">
    <property type="protein sequence ID" value="ABC83120.1"/>
    <property type="molecule type" value="Genomic_DNA"/>
</dbReference>
<dbReference type="RefSeq" id="WP_011422402.1">
    <property type="nucleotide sequence ID" value="NC_007760.1"/>
</dbReference>
<dbReference type="SMR" id="Q2IEW1"/>
<dbReference type="STRING" id="290397.Adeh_3353"/>
<dbReference type="MEROPS" id="S14.001"/>
<dbReference type="KEGG" id="ade:Adeh_3353"/>
<dbReference type="eggNOG" id="COG0740">
    <property type="taxonomic scope" value="Bacteria"/>
</dbReference>
<dbReference type="HOGENOM" id="CLU_058707_3_2_7"/>
<dbReference type="OrthoDB" id="9802800at2"/>
<dbReference type="Proteomes" id="UP000001935">
    <property type="component" value="Chromosome"/>
</dbReference>
<dbReference type="GO" id="GO:0005737">
    <property type="term" value="C:cytoplasm"/>
    <property type="evidence" value="ECO:0007669"/>
    <property type="project" value="UniProtKB-SubCell"/>
</dbReference>
<dbReference type="GO" id="GO:0009368">
    <property type="term" value="C:endopeptidase Clp complex"/>
    <property type="evidence" value="ECO:0007669"/>
    <property type="project" value="TreeGrafter"/>
</dbReference>
<dbReference type="GO" id="GO:0004176">
    <property type="term" value="F:ATP-dependent peptidase activity"/>
    <property type="evidence" value="ECO:0007669"/>
    <property type="project" value="InterPro"/>
</dbReference>
<dbReference type="GO" id="GO:0051117">
    <property type="term" value="F:ATPase binding"/>
    <property type="evidence" value="ECO:0007669"/>
    <property type="project" value="TreeGrafter"/>
</dbReference>
<dbReference type="GO" id="GO:0004252">
    <property type="term" value="F:serine-type endopeptidase activity"/>
    <property type="evidence" value="ECO:0007669"/>
    <property type="project" value="UniProtKB-UniRule"/>
</dbReference>
<dbReference type="GO" id="GO:0006515">
    <property type="term" value="P:protein quality control for misfolded or incompletely synthesized proteins"/>
    <property type="evidence" value="ECO:0007669"/>
    <property type="project" value="TreeGrafter"/>
</dbReference>
<dbReference type="CDD" id="cd07017">
    <property type="entry name" value="S14_ClpP_2"/>
    <property type="match status" value="1"/>
</dbReference>
<dbReference type="FunFam" id="3.90.226.10:FF:000001">
    <property type="entry name" value="ATP-dependent Clp protease proteolytic subunit"/>
    <property type="match status" value="1"/>
</dbReference>
<dbReference type="Gene3D" id="3.90.226.10">
    <property type="entry name" value="2-enoyl-CoA Hydratase, Chain A, domain 1"/>
    <property type="match status" value="1"/>
</dbReference>
<dbReference type="HAMAP" id="MF_00444">
    <property type="entry name" value="ClpP"/>
    <property type="match status" value="1"/>
</dbReference>
<dbReference type="InterPro" id="IPR001907">
    <property type="entry name" value="ClpP"/>
</dbReference>
<dbReference type="InterPro" id="IPR029045">
    <property type="entry name" value="ClpP/crotonase-like_dom_sf"/>
</dbReference>
<dbReference type="InterPro" id="IPR023562">
    <property type="entry name" value="ClpP/TepA"/>
</dbReference>
<dbReference type="InterPro" id="IPR018215">
    <property type="entry name" value="ClpP_Ser_AS"/>
</dbReference>
<dbReference type="NCBIfam" id="TIGR00493">
    <property type="entry name" value="clpP"/>
    <property type="match status" value="1"/>
</dbReference>
<dbReference type="NCBIfam" id="NF001368">
    <property type="entry name" value="PRK00277.1"/>
    <property type="match status" value="1"/>
</dbReference>
<dbReference type="NCBIfam" id="NF009205">
    <property type="entry name" value="PRK12553.1"/>
    <property type="match status" value="1"/>
</dbReference>
<dbReference type="PANTHER" id="PTHR10381">
    <property type="entry name" value="ATP-DEPENDENT CLP PROTEASE PROTEOLYTIC SUBUNIT"/>
    <property type="match status" value="1"/>
</dbReference>
<dbReference type="PANTHER" id="PTHR10381:SF70">
    <property type="entry name" value="ATP-DEPENDENT CLP PROTEASE PROTEOLYTIC SUBUNIT"/>
    <property type="match status" value="1"/>
</dbReference>
<dbReference type="Pfam" id="PF00574">
    <property type="entry name" value="CLP_protease"/>
    <property type="match status" value="1"/>
</dbReference>
<dbReference type="PRINTS" id="PR00127">
    <property type="entry name" value="CLPPROTEASEP"/>
</dbReference>
<dbReference type="SUPFAM" id="SSF52096">
    <property type="entry name" value="ClpP/crotonase"/>
    <property type="match status" value="1"/>
</dbReference>
<dbReference type="PROSITE" id="PS00381">
    <property type="entry name" value="CLP_PROTEASE_SER"/>
    <property type="match status" value="1"/>
</dbReference>
<sequence>MPYIPMPYVVEQTHRGERSYDIYSRLLKDRIIFLGTPVDDDVANVIIAQLLFLESEDPDKDINLYINSPGGSVTSGLAIYDTMQYVKPQVSTICLGQAASMGAFLLAGGAAGKRFAVPNARIMIHQLSGGFQGQATDIEIQAKEALRLKAKLNEIMARHTRQPIERIERDTERDYFMSAGEAKEYGLIDDVFLHKKAADKKPQ</sequence>
<feature type="chain" id="PRO_0000236382" description="ATP-dependent Clp protease proteolytic subunit">
    <location>
        <begin position="1"/>
        <end position="203"/>
    </location>
</feature>
<feature type="active site" description="Nucleophile" evidence="1">
    <location>
        <position position="100"/>
    </location>
</feature>
<feature type="active site" evidence="1">
    <location>
        <position position="125"/>
    </location>
</feature>
<reference key="1">
    <citation type="submission" date="2006-01" db="EMBL/GenBank/DDBJ databases">
        <title>Complete sequence of Anaeromyxobacter dehalogenans 2CP-C.</title>
        <authorList>
            <person name="Copeland A."/>
            <person name="Lucas S."/>
            <person name="Lapidus A."/>
            <person name="Barry K."/>
            <person name="Detter J.C."/>
            <person name="Glavina T."/>
            <person name="Hammon N."/>
            <person name="Israni S."/>
            <person name="Pitluck S."/>
            <person name="Brettin T."/>
            <person name="Bruce D."/>
            <person name="Han C."/>
            <person name="Tapia R."/>
            <person name="Gilna P."/>
            <person name="Kiss H."/>
            <person name="Schmutz J."/>
            <person name="Larimer F."/>
            <person name="Land M."/>
            <person name="Kyrpides N."/>
            <person name="Anderson I."/>
            <person name="Sanford R.A."/>
            <person name="Ritalahti K.M."/>
            <person name="Thomas H.S."/>
            <person name="Kirby J.R."/>
            <person name="Zhulin I.B."/>
            <person name="Loeffler F.E."/>
            <person name="Richardson P."/>
        </authorList>
    </citation>
    <scope>NUCLEOTIDE SEQUENCE [LARGE SCALE GENOMIC DNA]</scope>
    <source>
        <strain>2CP-C</strain>
    </source>
</reference>
<comment type="function">
    <text evidence="1">Cleaves peptides in various proteins in a process that requires ATP hydrolysis. Has a chymotrypsin-like activity. Plays a major role in the degradation of misfolded proteins.</text>
</comment>
<comment type="catalytic activity">
    <reaction evidence="1">
        <text>Hydrolysis of proteins to small peptides in the presence of ATP and magnesium. alpha-casein is the usual test substrate. In the absence of ATP, only oligopeptides shorter than five residues are hydrolyzed (such as succinyl-Leu-Tyr-|-NHMec, and Leu-Tyr-Leu-|-Tyr-Trp, in which cleavage of the -Tyr-|-Leu- and -Tyr-|-Trp bonds also occurs).</text>
        <dbReference type="EC" id="3.4.21.92"/>
    </reaction>
</comment>
<comment type="subunit">
    <text evidence="1">Fourteen ClpP subunits assemble into 2 heptameric rings which stack back to back to give a disk-like structure with a central cavity, resembling the structure of eukaryotic proteasomes.</text>
</comment>
<comment type="subcellular location">
    <subcellularLocation>
        <location evidence="1">Cytoplasm</location>
    </subcellularLocation>
</comment>
<comment type="similarity">
    <text evidence="1">Belongs to the peptidase S14 family.</text>
</comment>
<proteinExistence type="inferred from homology"/>
<name>CLPP_ANADE</name>
<keyword id="KW-0963">Cytoplasm</keyword>
<keyword id="KW-0378">Hydrolase</keyword>
<keyword id="KW-0645">Protease</keyword>
<keyword id="KW-1185">Reference proteome</keyword>
<keyword id="KW-0720">Serine protease</keyword>
<gene>
    <name evidence="1" type="primary">clpP</name>
    <name type="ordered locus">Adeh_3353</name>
</gene>